<feature type="chain" id="PRO_0000287800" description="Phenazine biosynthesis protein PhzB1">
    <location>
        <begin position="1"/>
        <end position="162"/>
    </location>
</feature>
<gene>
    <name evidence="4" type="primary">phzB1</name>
    <name type="ordered locus">PA4211</name>
</gene>
<evidence type="ECO:0000250" key="1">
    <source>
        <dbReference type="UniProtKB" id="Q9S508"/>
    </source>
</evidence>
<evidence type="ECO:0000269" key="2">
    <source>
    </source>
</evidence>
<evidence type="ECO:0000269" key="3">
    <source>
    </source>
</evidence>
<evidence type="ECO:0000303" key="4">
    <source>
    </source>
</evidence>
<evidence type="ECO:0000305" key="5"/>
<evidence type="ECO:0000305" key="6">
    <source>
    </source>
</evidence>
<organism>
    <name type="scientific">Pseudomonas aeruginosa (strain ATCC 15692 / DSM 22644 / CIP 104116 / JCM 14847 / LMG 12228 / 1C / PRS 101 / PAO1)</name>
    <dbReference type="NCBI Taxonomy" id="208964"/>
    <lineage>
        <taxon>Bacteria</taxon>
        <taxon>Pseudomonadati</taxon>
        <taxon>Pseudomonadota</taxon>
        <taxon>Gammaproteobacteria</taxon>
        <taxon>Pseudomonadales</taxon>
        <taxon>Pseudomonadaceae</taxon>
        <taxon>Pseudomonas</taxon>
    </lineage>
</organism>
<proteinExistence type="evidence at transcript level"/>
<protein>
    <recommendedName>
        <fullName evidence="4">Phenazine biosynthesis protein PhzB1</fullName>
    </recommendedName>
</protein>
<accession>O69753</accession>
<accession>Q7DC83</accession>
<sequence length="162" mass="18888">MPDTTNPIGFTDANELREKNRATVEKYMNTKGQDRLRRHELFVEDGCGGLWTTDTGSPIVIRGKDKLAEHAVWSLKCFPDWEWYNINIFGTDDPNHFWVECDGHGKILFPGYPEGYYENHFLHSFELEDGKIKRNREFMNVFQQLRALSIPVPQIKREGIPT</sequence>
<dbReference type="EMBL" id="AF005404">
    <property type="protein sequence ID" value="AAC64490.1"/>
    <property type="molecule type" value="Genomic_DNA"/>
</dbReference>
<dbReference type="EMBL" id="AE004091">
    <property type="protein sequence ID" value="AAG07598.1"/>
    <property type="molecule type" value="Genomic_DNA"/>
</dbReference>
<dbReference type="PIR" id="F83118">
    <property type="entry name" value="F83118"/>
</dbReference>
<dbReference type="RefSeq" id="NP_252900.1">
    <property type="nucleotide sequence ID" value="NC_002516.2"/>
</dbReference>
<dbReference type="SMR" id="O69753"/>
<dbReference type="STRING" id="208964.PA4211"/>
<dbReference type="PaxDb" id="208964-PA4211"/>
<dbReference type="DNASU" id="880518"/>
<dbReference type="GeneID" id="880518"/>
<dbReference type="KEGG" id="pae:PA4211"/>
<dbReference type="PATRIC" id="fig|208964.12.peg.4412"/>
<dbReference type="PseudoCAP" id="PA4211"/>
<dbReference type="HOGENOM" id="CLU_141345_0_0_6"/>
<dbReference type="InParanoid" id="O69753"/>
<dbReference type="OrthoDB" id="8479735at2"/>
<dbReference type="PhylomeDB" id="O69753"/>
<dbReference type="BioCyc" id="PAER208964:G1FZ6-4284-MONOMER"/>
<dbReference type="UniPathway" id="UPA00099"/>
<dbReference type="Proteomes" id="UP000002438">
    <property type="component" value="Chromosome"/>
</dbReference>
<dbReference type="GO" id="GO:0002047">
    <property type="term" value="P:phenazine biosynthetic process"/>
    <property type="evidence" value="ECO:0000314"/>
    <property type="project" value="PseudoCAP"/>
</dbReference>
<dbReference type="FunFam" id="3.10.450.50:FF:000014">
    <property type="entry name" value="Phenazine biosynthesis protein PhzB 2"/>
    <property type="match status" value="1"/>
</dbReference>
<dbReference type="Gene3D" id="3.10.450.50">
    <property type="match status" value="1"/>
</dbReference>
<dbReference type="InterPro" id="IPR032710">
    <property type="entry name" value="NTF2-like_dom_sf"/>
</dbReference>
<dbReference type="InterPro" id="IPR004964">
    <property type="entry name" value="PhzA_PhzB"/>
</dbReference>
<dbReference type="Pfam" id="PF03284">
    <property type="entry name" value="PHZA_PHZB"/>
    <property type="match status" value="1"/>
</dbReference>
<dbReference type="SUPFAM" id="SSF54427">
    <property type="entry name" value="NTF2-like"/>
    <property type="match status" value="1"/>
</dbReference>
<name>PHZB1_PSEAE</name>
<keyword id="KW-0045">Antibiotic biosynthesis</keyword>
<keyword id="KW-1185">Reference proteome</keyword>
<comment type="function">
    <text evidence="3 6">Involved in the biosynthesis of the antibiotic phenazine, a nitrogen-containing heterocyclic molecule. PhzB1 (operon phzA1B1C1E1F1G1) has a role in the biosynthesis of the phenazine during planktonic growth.</text>
</comment>
<comment type="pathway">
    <text evidence="6">Antibiotic biosynthesis; phenazine biosynthesis.</text>
</comment>
<comment type="subunit">
    <text evidence="1">Homodimer.</text>
</comment>
<comment type="induction">
    <text evidence="2 3">Under control of LasR (PubMed:11544214). In liquid cultures (aerobic), phz1 operon is induced by quinolone signal via 2-heptyl-3-hydroxy-4-quinolone (PQS) (PubMed:23129634). In biofilm (microaerobic), phz1 operon is not induced by PQS, because the biosynthesis of PQS by the monooxygenase PqsH requires molecular oxygen (PubMed:23129634).</text>
</comment>
<comment type="similarity">
    <text evidence="5">Belongs to the PhzA/PhzB family.</text>
</comment>
<reference key="1">
    <citation type="journal article" date="2001" name="J. Bacteriol.">
        <title>Functional analysis of genes for biosynthesis of pyocyanin and phenazine-1-carboxamide from Pseudomonas aeruginosa PAO1.</title>
        <authorList>
            <person name="Mavrodi D.V."/>
            <person name="Bonsall R.F."/>
            <person name="Delaney S.M."/>
            <person name="Soule M.J."/>
            <person name="Phillips G."/>
            <person name="Thomashow L.S."/>
        </authorList>
    </citation>
    <scope>NUCLEOTIDE SEQUENCE [GENOMIC DNA]</scope>
    <scope>FUNCTION</scope>
    <scope>PATHWAY</scope>
    <source>
        <strain>ATCC 15692 / DSM 22644 / CIP 104116 / JCM 14847 / LMG 12228 / 1C / PRS 101 / PAO1</strain>
    </source>
</reference>
<reference key="2">
    <citation type="journal article" date="2000" name="Nature">
        <title>Complete genome sequence of Pseudomonas aeruginosa PAO1, an opportunistic pathogen.</title>
        <authorList>
            <person name="Stover C.K."/>
            <person name="Pham X.-Q.T."/>
            <person name="Erwin A.L."/>
            <person name="Mizoguchi S.D."/>
            <person name="Warrener P."/>
            <person name="Hickey M.J."/>
            <person name="Brinkman F.S.L."/>
            <person name="Hufnagle W.O."/>
            <person name="Kowalik D.J."/>
            <person name="Lagrou M."/>
            <person name="Garber R.L."/>
            <person name="Goltry L."/>
            <person name="Tolentino E."/>
            <person name="Westbrock-Wadman S."/>
            <person name="Yuan Y."/>
            <person name="Brody L.L."/>
            <person name="Coulter S.N."/>
            <person name="Folger K.R."/>
            <person name="Kas A."/>
            <person name="Larbig K."/>
            <person name="Lim R.M."/>
            <person name="Smith K.A."/>
            <person name="Spencer D.H."/>
            <person name="Wong G.K.-S."/>
            <person name="Wu Z."/>
            <person name="Paulsen I.T."/>
            <person name="Reizer J."/>
            <person name="Saier M.H. Jr."/>
            <person name="Hancock R.E.W."/>
            <person name="Lory S."/>
            <person name="Olson M.V."/>
        </authorList>
    </citation>
    <scope>NUCLEOTIDE SEQUENCE [LARGE SCALE GENOMIC DNA]</scope>
    <source>
        <strain>ATCC 15692 / DSM 22644 / CIP 104116 / JCM 14847 / LMG 12228 / 1C / PRS 101 / PAO1</strain>
    </source>
</reference>
<reference key="3">
    <citation type="journal article" date="2001" name="J. Bacteriol.">
        <title>Promoter specificity elements in Pseudomonas aeruginosa quorum-sensing-controlled genes.</title>
        <authorList>
            <person name="Whiteley M."/>
            <person name="Greenberg E.P."/>
        </authorList>
    </citation>
    <scope>INDUCTION</scope>
</reference>
<reference key="4">
    <citation type="journal article" date="2012" name="Proc. Natl. Acad. Sci. U.S.A.">
        <title>Redundant phenazine operons in Pseudomonas aeruginosa exhibit environment-dependent expression and differential roles in pathogenicity.</title>
        <authorList>
            <person name="Recinos D.A."/>
            <person name="Sekedat M.D."/>
            <person name="Hernandez A."/>
            <person name="Cohen T.S."/>
            <person name="Sakhtah H."/>
            <person name="Prince A.S."/>
            <person name="Price-Whelan A."/>
            <person name="Dietrich L.E."/>
        </authorList>
    </citation>
    <scope>FUNCTION</scope>
    <scope>INDUCTION</scope>
</reference>